<reference key="1">
    <citation type="journal article" date="2004" name="J. Mol. Microbiol. Biotechnol.">
        <title>The complete genome sequence of Bacillus licheniformis DSM13, an organism with great industrial potential.</title>
        <authorList>
            <person name="Veith B."/>
            <person name="Herzberg C."/>
            <person name="Steckel S."/>
            <person name="Feesche J."/>
            <person name="Maurer K.H."/>
            <person name="Ehrenreich P."/>
            <person name="Baeumer S."/>
            <person name="Henne A."/>
            <person name="Liesegang H."/>
            <person name="Merkl R."/>
            <person name="Ehrenreich A."/>
            <person name="Gottschalk G."/>
        </authorList>
    </citation>
    <scope>NUCLEOTIDE SEQUENCE [LARGE SCALE GENOMIC DNA]</scope>
    <source>
        <strain>ATCC 14580 / DSM 13 / JCM 2505 / CCUG 7422 / NBRC 12200 / NCIMB 9375 / NCTC 10341 / NRRL NRS-1264 / Gibson 46</strain>
    </source>
</reference>
<reference key="2">
    <citation type="journal article" date="2004" name="Genome Biol.">
        <title>Complete genome sequence of the industrial bacterium Bacillus licheniformis and comparisons with closely related Bacillus species.</title>
        <authorList>
            <person name="Rey M.W."/>
            <person name="Ramaiya P."/>
            <person name="Nelson B.A."/>
            <person name="Brody-Karpin S.D."/>
            <person name="Zaretsky E.J."/>
            <person name="Tang M."/>
            <person name="Lopez de Leon A."/>
            <person name="Xiang H."/>
            <person name="Gusti V."/>
            <person name="Clausen I.G."/>
            <person name="Olsen P.B."/>
            <person name="Rasmussen M.D."/>
            <person name="Andersen J.T."/>
            <person name="Joergensen P.L."/>
            <person name="Larsen T.S."/>
            <person name="Sorokin A."/>
            <person name="Bolotin A."/>
            <person name="Lapidus A."/>
            <person name="Galleron N."/>
            <person name="Ehrlich S.D."/>
            <person name="Berka R.M."/>
        </authorList>
    </citation>
    <scope>NUCLEOTIDE SEQUENCE [LARGE SCALE GENOMIC DNA]</scope>
    <source>
        <strain>ATCC 14580 / DSM 13 / JCM 2505 / CCUG 7422 / NBRC 12200 / NCIMB 9375 / NCTC 10341 / NRRL NRS-1264 / Gibson 46</strain>
    </source>
</reference>
<gene>
    <name evidence="1" type="primary">thiE</name>
    <name type="ordered locus">BLi04051</name>
    <name type="ordered locus">BL03866</name>
</gene>
<keyword id="KW-0460">Magnesium</keyword>
<keyword id="KW-0479">Metal-binding</keyword>
<keyword id="KW-1185">Reference proteome</keyword>
<keyword id="KW-0784">Thiamine biosynthesis</keyword>
<keyword id="KW-0808">Transferase</keyword>
<protein>
    <recommendedName>
        <fullName evidence="1">Thiamine-phosphate synthase</fullName>
        <shortName evidence="1">TP synthase</shortName>
        <shortName evidence="1">TPS</shortName>
        <ecNumber evidence="1">2.5.1.3</ecNumber>
    </recommendedName>
    <alternativeName>
        <fullName evidence="1">Thiamine-phosphate pyrophosphorylase</fullName>
        <shortName evidence="1">TMP pyrophosphorylase</shortName>
        <shortName evidence="1">TMP-PPase</shortName>
    </alternativeName>
</protein>
<feature type="chain" id="PRO_1000008128" description="Thiamine-phosphate synthase">
    <location>
        <begin position="1"/>
        <end position="224"/>
    </location>
</feature>
<feature type="binding site" evidence="1">
    <location>
        <begin position="44"/>
        <end position="48"/>
    </location>
    <ligand>
        <name>4-amino-2-methyl-5-(diphosphooxymethyl)pyrimidine</name>
        <dbReference type="ChEBI" id="CHEBI:57841"/>
    </ligand>
</feature>
<feature type="binding site" evidence="1">
    <location>
        <position position="79"/>
    </location>
    <ligand>
        <name>4-amino-2-methyl-5-(diphosphooxymethyl)pyrimidine</name>
        <dbReference type="ChEBI" id="CHEBI:57841"/>
    </ligand>
</feature>
<feature type="binding site" evidence="1">
    <location>
        <position position="80"/>
    </location>
    <ligand>
        <name>Mg(2+)</name>
        <dbReference type="ChEBI" id="CHEBI:18420"/>
    </ligand>
</feature>
<feature type="binding site" evidence="1">
    <location>
        <position position="99"/>
    </location>
    <ligand>
        <name>Mg(2+)</name>
        <dbReference type="ChEBI" id="CHEBI:18420"/>
    </ligand>
</feature>
<feature type="binding site" evidence="1">
    <location>
        <position position="117"/>
    </location>
    <ligand>
        <name>4-amino-2-methyl-5-(diphosphooxymethyl)pyrimidine</name>
        <dbReference type="ChEBI" id="CHEBI:57841"/>
    </ligand>
</feature>
<feature type="binding site" evidence="1">
    <location>
        <begin position="143"/>
        <end position="145"/>
    </location>
    <ligand>
        <name>2-[(2R,5Z)-2-carboxy-4-methylthiazol-5(2H)-ylidene]ethyl phosphate</name>
        <dbReference type="ChEBI" id="CHEBI:62899"/>
    </ligand>
</feature>
<feature type="binding site" evidence="1">
    <location>
        <position position="146"/>
    </location>
    <ligand>
        <name>4-amino-2-methyl-5-(diphosphooxymethyl)pyrimidine</name>
        <dbReference type="ChEBI" id="CHEBI:57841"/>
    </ligand>
</feature>
<feature type="binding site" evidence="1">
    <location>
        <position position="175"/>
    </location>
    <ligand>
        <name>2-[(2R,5Z)-2-carboxy-4-methylthiazol-5(2H)-ylidene]ethyl phosphate</name>
        <dbReference type="ChEBI" id="CHEBI:62899"/>
    </ligand>
</feature>
<feature type="binding site" evidence="1">
    <location>
        <begin position="195"/>
        <end position="196"/>
    </location>
    <ligand>
        <name>2-[(2R,5Z)-2-carboxy-4-methylthiazol-5(2H)-ylidene]ethyl phosphate</name>
        <dbReference type="ChEBI" id="CHEBI:62899"/>
    </ligand>
</feature>
<sequence length="224" mass="23650">MTRVSEEAMKDLLSVYFIMGSNNTAGDPLTVIEKALKGGATLFQFREKGEGALKAGDQTAFARQVQALCKQFNVPFIINDDVELALELDADGVHIGQDDDKAADVRARIGDKILGVSAHTLEEVLKAEKDGADYIGAGPVYPTETKRDTKAVQGVSLIQEIRRQGIGIPVVGIGGITVENCVPVIEAGADGISVISAISKAADPKQAAEAFSEKVQATKQSAHS</sequence>
<proteinExistence type="inferred from homology"/>
<dbReference type="EC" id="2.5.1.3" evidence="1"/>
<dbReference type="EMBL" id="CP000002">
    <property type="protein sequence ID" value="AAU25491.1"/>
    <property type="molecule type" value="Genomic_DNA"/>
</dbReference>
<dbReference type="EMBL" id="AE017333">
    <property type="protein sequence ID" value="AAU42864.1"/>
    <property type="molecule type" value="Genomic_DNA"/>
</dbReference>
<dbReference type="RefSeq" id="WP_011198416.1">
    <property type="nucleotide sequence ID" value="NC_006322.1"/>
</dbReference>
<dbReference type="SMR" id="Q65DK0"/>
<dbReference type="STRING" id="279010.BL03866"/>
<dbReference type="GeneID" id="92859379"/>
<dbReference type="KEGG" id="bld:BLi04051"/>
<dbReference type="KEGG" id="bli:BL03866"/>
<dbReference type="PATRIC" id="fig|279010.13.peg.4127"/>
<dbReference type="eggNOG" id="COG0352">
    <property type="taxonomic scope" value="Bacteria"/>
</dbReference>
<dbReference type="HOGENOM" id="CLU_018272_3_2_9"/>
<dbReference type="UniPathway" id="UPA00060">
    <property type="reaction ID" value="UER00141"/>
</dbReference>
<dbReference type="Proteomes" id="UP000000606">
    <property type="component" value="Chromosome"/>
</dbReference>
<dbReference type="GO" id="GO:0005737">
    <property type="term" value="C:cytoplasm"/>
    <property type="evidence" value="ECO:0007669"/>
    <property type="project" value="TreeGrafter"/>
</dbReference>
<dbReference type="GO" id="GO:0000287">
    <property type="term" value="F:magnesium ion binding"/>
    <property type="evidence" value="ECO:0007669"/>
    <property type="project" value="UniProtKB-UniRule"/>
</dbReference>
<dbReference type="GO" id="GO:0004789">
    <property type="term" value="F:thiamine-phosphate diphosphorylase activity"/>
    <property type="evidence" value="ECO:0007669"/>
    <property type="project" value="UniProtKB-UniRule"/>
</dbReference>
<dbReference type="GO" id="GO:0009228">
    <property type="term" value="P:thiamine biosynthetic process"/>
    <property type="evidence" value="ECO:0007669"/>
    <property type="project" value="UniProtKB-KW"/>
</dbReference>
<dbReference type="GO" id="GO:0009229">
    <property type="term" value="P:thiamine diphosphate biosynthetic process"/>
    <property type="evidence" value="ECO:0007669"/>
    <property type="project" value="UniProtKB-UniRule"/>
</dbReference>
<dbReference type="CDD" id="cd00564">
    <property type="entry name" value="TMP_TenI"/>
    <property type="match status" value="1"/>
</dbReference>
<dbReference type="FunFam" id="3.20.20.70:FF:000096">
    <property type="entry name" value="Thiamine-phosphate synthase"/>
    <property type="match status" value="1"/>
</dbReference>
<dbReference type="Gene3D" id="3.20.20.70">
    <property type="entry name" value="Aldolase class I"/>
    <property type="match status" value="1"/>
</dbReference>
<dbReference type="HAMAP" id="MF_00097">
    <property type="entry name" value="TMP_synthase"/>
    <property type="match status" value="1"/>
</dbReference>
<dbReference type="InterPro" id="IPR013785">
    <property type="entry name" value="Aldolase_TIM"/>
</dbReference>
<dbReference type="InterPro" id="IPR036206">
    <property type="entry name" value="ThiamineP_synth_sf"/>
</dbReference>
<dbReference type="InterPro" id="IPR022998">
    <property type="entry name" value="ThiamineP_synth_TenI"/>
</dbReference>
<dbReference type="InterPro" id="IPR034291">
    <property type="entry name" value="TMP_synthase"/>
</dbReference>
<dbReference type="NCBIfam" id="TIGR00693">
    <property type="entry name" value="thiE"/>
    <property type="match status" value="1"/>
</dbReference>
<dbReference type="PANTHER" id="PTHR20857">
    <property type="entry name" value="THIAMINE-PHOSPHATE PYROPHOSPHORYLASE"/>
    <property type="match status" value="1"/>
</dbReference>
<dbReference type="PANTHER" id="PTHR20857:SF15">
    <property type="entry name" value="THIAMINE-PHOSPHATE SYNTHASE"/>
    <property type="match status" value="1"/>
</dbReference>
<dbReference type="Pfam" id="PF02581">
    <property type="entry name" value="TMP-TENI"/>
    <property type="match status" value="1"/>
</dbReference>
<dbReference type="SUPFAM" id="SSF51391">
    <property type="entry name" value="Thiamin phosphate synthase"/>
    <property type="match status" value="1"/>
</dbReference>
<comment type="function">
    <text evidence="1">Condenses 4-methyl-5-(beta-hydroxyethyl)thiazole monophosphate (THZ-P) and 2-methyl-4-amino-5-hydroxymethyl pyrimidine pyrophosphate (HMP-PP) to form thiamine monophosphate (TMP).</text>
</comment>
<comment type="catalytic activity">
    <reaction evidence="1">
        <text>2-[(2R,5Z)-2-carboxy-4-methylthiazol-5(2H)-ylidene]ethyl phosphate + 4-amino-2-methyl-5-(diphosphooxymethyl)pyrimidine + 2 H(+) = thiamine phosphate + CO2 + diphosphate</text>
        <dbReference type="Rhea" id="RHEA:47844"/>
        <dbReference type="ChEBI" id="CHEBI:15378"/>
        <dbReference type="ChEBI" id="CHEBI:16526"/>
        <dbReference type="ChEBI" id="CHEBI:33019"/>
        <dbReference type="ChEBI" id="CHEBI:37575"/>
        <dbReference type="ChEBI" id="CHEBI:57841"/>
        <dbReference type="ChEBI" id="CHEBI:62899"/>
        <dbReference type="EC" id="2.5.1.3"/>
    </reaction>
</comment>
<comment type="catalytic activity">
    <reaction evidence="1">
        <text>2-(2-carboxy-4-methylthiazol-5-yl)ethyl phosphate + 4-amino-2-methyl-5-(diphosphooxymethyl)pyrimidine + 2 H(+) = thiamine phosphate + CO2 + diphosphate</text>
        <dbReference type="Rhea" id="RHEA:47848"/>
        <dbReference type="ChEBI" id="CHEBI:15378"/>
        <dbReference type="ChEBI" id="CHEBI:16526"/>
        <dbReference type="ChEBI" id="CHEBI:33019"/>
        <dbReference type="ChEBI" id="CHEBI:37575"/>
        <dbReference type="ChEBI" id="CHEBI:57841"/>
        <dbReference type="ChEBI" id="CHEBI:62890"/>
        <dbReference type="EC" id="2.5.1.3"/>
    </reaction>
</comment>
<comment type="catalytic activity">
    <reaction evidence="1">
        <text>4-methyl-5-(2-phosphooxyethyl)-thiazole + 4-amino-2-methyl-5-(diphosphooxymethyl)pyrimidine + H(+) = thiamine phosphate + diphosphate</text>
        <dbReference type="Rhea" id="RHEA:22328"/>
        <dbReference type="ChEBI" id="CHEBI:15378"/>
        <dbReference type="ChEBI" id="CHEBI:33019"/>
        <dbReference type="ChEBI" id="CHEBI:37575"/>
        <dbReference type="ChEBI" id="CHEBI:57841"/>
        <dbReference type="ChEBI" id="CHEBI:58296"/>
        <dbReference type="EC" id="2.5.1.3"/>
    </reaction>
</comment>
<comment type="cofactor">
    <cofactor evidence="1">
        <name>Mg(2+)</name>
        <dbReference type="ChEBI" id="CHEBI:18420"/>
    </cofactor>
    <text evidence="1">Binds 1 Mg(2+) ion per subunit.</text>
</comment>
<comment type="pathway">
    <text evidence="1">Cofactor biosynthesis; thiamine diphosphate biosynthesis; thiamine phosphate from 4-amino-2-methyl-5-diphosphomethylpyrimidine and 4-methyl-5-(2-phosphoethyl)-thiazole: step 1/1.</text>
</comment>
<comment type="similarity">
    <text evidence="1">Belongs to the thiamine-phosphate synthase family.</text>
</comment>
<organism>
    <name type="scientific">Bacillus licheniformis (strain ATCC 14580 / DSM 13 / JCM 2505 / CCUG 7422 / NBRC 12200 / NCIMB 9375 / NCTC 10341 / NRRL NRS-1264 / Gibson 46)</name>
    <dbReference type="NCBI Taxonomy" id="279010"/>
    <lineage>
        <taxon>Bacteria</taxon>
        <taxon>Bacillati</taxon>
        <taxon>Bacillota</taxon>
        <taxon>Bacilli</taxon>
        <taxon>Bacillales</taxon>
        <taxon>Bacillaceae</taxon>
        <taxon>Bacillus</taxon>
    </lineage>
</organism>
<evidence type="ECO:0000255" key="1">
    <source>
        <dbReference type="HAMAP-Rule" id="MF_00097"/>
    </source>
</evidence>
<name>THIE_BACLD</name>
<accession>Q65DK0</accession>
<accession>Q62P20</accession>